<name>SYW_SALTI</name>
<reference key="1">
    <citation type="journal article" date="2001" name="Nature">
        <title>Complete genome sequence of a multiple drug resistant Salmonella enterica serovar Typhi CT18.</title>
        <authorList>
            <person name="Parkhill J."/>
            <person name="Dougan G."/>
            <person name="James K.D."/>
            <person name="Thomson N.R."/>
            <person name="Pickard D."/>
            <person name="Wain J."/>
            <person name="Churcher C.M."/>
            <person name="Mungall K.L."/>
            <person name="Bentley S.D."/>
            <person name="Holden M.T.G."/>
            <person name="Sebaihia M."/>
            <person name="Baker S."/>
            <person name="Basham D."/>
            <person name="Brooks K."/>
            <person name="Chillingworth T."/>
            <person name="Connerton P."/>
            <person name="Cronin A."/>
            <person name="Davis P."/>
            <person name="Davies R.M."/>
            <person name="Dowd L."/>
            <person name="White N."/>
            <person name="Farrar J."/>
            <person name="Feltwell T."/>
            <person name="Hamlin N."/>
            <person name="Haque A."/>
            <person name="Hien T.T."/>
            <person name="Holroyd S."/>
            <person name="Jagels K."/>
            <person name="Krogh A."/>
            <person name="Larsen T.S."/>
            <person name="Leather S."/>
            <person name="Moule S."/>
            <person name="O'Gaora P."/>
            <person name="Parry C."/>
            <person name="Quail M.A."/>
            <person name="Rutherford K.M."/>
            <person name="Simmonds M."/>
            <person name="Skelton J."/>
            <person name="Stevens K."/>
            <person name="Whitehead S."/>
            <person name="Barrell B.G."/>
        </authorList>
    </citation>
    <scope>NUCLEOTIDE SEQUENCE [LARGE SCALE GENOMIC DNA]</scope>
    <source>
        <strain>CT18</strain>
    </source>
</reference>
<reference key="2">
    <citation type="journal article" date="2003" name="J. Bacteriol.">
        <title>Comparative genomics of Salmonella enterica serovar Typhi strains Ty2 and CT18.</title>
        <authorList>
            <person name="Deng W."/>
            <person name="Liou S.-R."/>
            <person name="Plunkett G. III"/>
            <person name="Mayhew G.F."/>
            <person name="Rose D.J."/>
            <person name="Burland V."/>
            <person name="Kodoyianni V."/>
            <person name="Schwartz D.C."/>
            <person name="Blattner F.R."/>
        </authorList>
    </citation>
    <scope>NUCLEOTIDE SEQUENCE [LARGE SCALE GENOMIC DNA]</scope>
    <source>
        <strain>ATCC 700931 / Ty2</strain>
    </source>
</reference>
<feature type="chain" id="PRO_0000136671" description="Tryptophan--tRNA ligase">
    <location>
        <begin position="1"/>
        <end position="334"/>
    </location>
</feature>
<feature type="short sequence motif" description="'HIGH' region" evidence="1">
    <location>
        <begin position="12"/>
        <end position="20"/>
    </location>
</feature>
<feature type="short sequence motif" description="'KMSKS' region" evidence="1">
    <location>
        <begin position="195"/>
        <end position="199"/>
    </location>
</feature>
<feature type="binding site" evidence="1">
    <location>
        <begin position="11"/>
        <end position="13"/>
    </location>
    <ligand>
        <name>ATP</name>
        <dbReference type="ChEBI" id="CHEBI:30616"/>
    </ligand>
</feature>
<feature type="binding site" evidence="1">
    <location>
        <begin position="19"/>
        <end position="20"/>
    </location>
    <ligand>
        <name>ATP</name>
        <dbReference type="ChEBI" id="CHEBI:30616"/>
    </ligand>
</feature>
<feature type="binding site" evidence="1">
    <location>
        <position position="135"/>
    </location>
    <ligand>
        <name>L-tryptophan</name>
        <dbReference type="ChEBI" id="CHEBI:57912"/>
    </ligand>
</feature>
<feature type="binding site" evidence="1">
    <location>
        <begin position="147"/>
        <end position="149"/>
    </location>
    <ligand>
        <name>ATP</name>
        <dbReference type="ChEBI" id="CHEBI:30616"/>
    </ligand>
</feature>
<feature type="binding site" evidence="1">
    <location>
        <position position="186"/>
    </location>
    <ligand>
        <name>ATP</name>
        <dbReference type="ChEBI" id="CHEBI:30616"/>
    </ligand>
</feature>
<feature type="binding site" evidence="1">
    <location>
        <begin position="195"/>
        <end position="199"/>
    </location>
    <ligand>
        <name>ATP</name>
        <dbReference type="ChEBI" id="CHEBI:30616"/>
    </ligand>
</feature>
<dbReference type="EC" id="6.1.1.2" evidence="1"/>
<dbReference type="EMBL" id="AL513382">
    <property type="protein sequence ID" value="CAD08133.1"/>
    <property type="molecule type" value="Genomic_DNA"/>
</dbReference>
<dbReference type="EMBL" id="AE014613">
    <property type="protein sequence ID" value="AAO71495.1"/>
    <property type="molecule type" value="Genomic_DNA"/>
</dbReference>
<dbReference type="RefSeq" id="NP_458423.1">
    <property type="nucleotide sequence ID" value="NC_003198.1"/>
</dbReference>
<dbReference type="RefSeq" id="WP_000165562.1">
    <property type="nucleotide sequence ID" value="NZ_WSUR01000001.1"/>
</dbReference>
<dbReference type="SMR" id="P0A2P3"/>
<dbReference type="STRING" id="220341.gene:17588146"/>
<dbReference type="KEGG" id="stt:t4024"/>
<dbReference type="KEGG" id="sty:STY4315"/>
<dbReference type="PATRIC" id="fig|220341.7.peg.4410"/>
<dbReference type="eggNOG" id="COG0180">
    <property type="taxonomic scope" value="Bacteria"/>
</dbReference>
<dbReference type="HOGENOM" id="CLU_029244_1_1_6"/>
<dbReference type="OMA" id="GWGQFKP"/>
<dbReference type="OrthoDB" id="9801042at2"/>
<dbReference type="Proteomes" id="UP000000541">
    <property type="component" value="Chromosome"/>
</dbReference>
<dbReference type="Proteomes" id="UP000002670">
    <property type="component" value="Chromosome"/>
</dbReference>
<dbReference type="GO" id="GO:0005829">
    <property type="term" value="C:cytosol"/>
    <property type="evidence" value="ECO:0007669"/>
    <property type="project" value="TreeGrafter"/>
</dbReference>
<dbReference type="GO" id="GO:0005524">
    <property type="term" value="F:ATP binding"/>
    <property type="evidence" value="ECO:0007669"/>
    <property type="project" value="UniProtKB-UniRule"/>
</dbReference>
<dbReference type="GO" id="GO:0004830">
    <property type="term" value="F:tryptophan-tRNA ligase activity"/>
    <property type="evidence" value="ECO:0007669"/>
    <property type="project" value="UniProtKB-UniRule"/>
</dbReference>
<dbReference type="GO" id="GO:0006436">
    <property type="term" value="P:tryptophanyl-tRNA aminoacylation"/>
    <property type="evidence" value="ECO:0007669"/>
    <property type="project" value="UniProtKB-UniRule"/>
</dbReference>
<dbReference type="CDD" id="cd00806">
    <property type="entry name" value="TrpRS_core"/>
    <property type="match status" value="1"/>
</dbReference>
<dbReference type="FunFam" id="1.10.240.10:FF:000002">
    <property type="entry name" value="Tryptophan--tRNA ligase"/>
    <property type="match status" value="1"/>
</dbReference>
<dbReference type="FunFam" id="3.40.50.620:FF:000024">
    <property type="entry name" value="Tryptophan--tRNA ligase"/>
    <property type="match status" value="1"/>
</dbReference>
<dbReference type="Gene3D" id="3.40.50.620">
    <property type="entry name" value="HUPs"/>
    <property type="match status" value="1"/>
</dbReference>
<dbReference type="Gene3D" id="1.10.240.10">
    <property type="entry name" value="Tyrosyl-Transfer RNA Synthetase"/>
    <property type="match status" value="1"/>
</dbReference>
<dbReference type="HAMAP" id="MF_00140_B">
    <property type="entry name" value="Trp_tRNA_synth_B"/>
    <property type="match status" value="1"/>
</dbReference>
<dbReference type="InterPro" id="IPR001412">
    <property type="entry name" value="aa-tRNA-synth_I_CS"/>
</dbReference>
<dbReference type="InterPro" id="IPR002305">
    <property type="entry name" value="aa-tRNA-synth_Ic"/>
</dbReference>
<dbReference type="InterPro" id="IPR014729">
    <property type="entry name" value="Rossmann-like_a/b/a_fold"/>
</dbReference>
<dbReference type="InterPro" id="IPR002306">
    <property type="entry name" value="Trp-tRNA-ligase"/>
</dbReference>
<dbReference type="InterPro" id="IPR024109">
    <property type="entry name" value="Trp-tRNA-ligase_bac-type"/>
</dbReference>
<dbReference type="InterPro" id="IPR050203">
    <property type="entry name" value="Trp-tRNA_synthetase"/>
</dbReference>
<dbReference type="NCBIfam" id="TIGR00233">
    <property type="entry name" value="trpS"/>
    <property type="match status" value="1"/>
</dbReference>
<dbReference type="PANTHER" id="PTHR43766">
    <property type="entry name" value="TRYPTOPHAN--TRNA LIGASE, MITOCHONDRIAL"/>
    <property type="match status" value="1"/>
</dbReference>
<dbReference type="PANTHER" id="PTHR43766:SF1">
    <property type="entry name" value="TRYPTOPHAN--TRNA LIGASE, MITOCHONDRIAL"/>
    <property type="match status" value="1"/>
</dbReference>
<dbReference type="Pfam" id="PF00579">
    <property type="entry name" value="tRNA-synt_1b"/>
    <property type="match status" value="1"/>
</dbReference>
<dbReference type="PRINTS" id="PR01039">
    <property type="entry name" value="TRNASYNTHTRP"/>
</dbReference>
<dbReference type="SUPFAM" id="SSF52374">
    <property type="entry name" value="Nucleotidylyl transferase"/>
    <property type="match status" value="1"/>
</dbReference>
<dbReference type="PROSITE" id="PS00178">
    <property type="entry name" value="AA_TRNA_LIGASE_I"/>
    <property type="match status" value="1"/>
</dbReference>
<gene>
    <name evidence="1" type="primary">trpS</name>
    <name type="ordered locus">STY4315</name>
    <name type="ordered locus">t4024</name>
</gene>
<proteinExistence type="inferred from homology"/>
<organism>
    <name type="scientific">Salmonella typhi</name>
    <dbReference type="NCBI Taxonomy" id="90370"/>
    <lineage>
        <taxon>Bacteria</taxon>
        <taxon>Pseudomonadati</taxon>
        <taxon>Pseudomonadota</taxon>
        <taxon>Gammaproteobacteria</taxon>
        <taxon>Enterobacterales</taxon>
        <taxon>Enterobacteriaceae</taxon>
        <taxon>Salmonella</taxon>
    </lineage>
</organism>
<protein>
    <recommendedName>
        <fullName evidence="1">Tryptophan--tRNA ligase</fullName>
        <ecNumber evidence="1">6.1.1.2</ecNumber>
    </recommendedName>
    <alternativeName>
        <fullName evidence="1">Tryptophanyl-tRNA synthetase</fullName>
        <shortName evidence="1">TrpRS</shortName>
    </alternativeName>
</protein>
<keyword id="KW-0030">Aminoacyl-tRNA synthetase</keyword>
<keyword id="KW-0067">ATP-binding</keyword>
<keyword id="KW-0963">Cytoplasm</keyword>
<keyword id="KW-0436">Ligase</keyword>
<keyword id="KW-0547">Nucleotide-binding</keyword>
<keyword id="KW-0648">Protein biosynthesis</keyword>
<sequence length="334" mass="37401">MTKPIVFSGAQPSGELTIGNYMGALRQWVNMQDDYHCIYCIVDQHAITVRQDAQQLRKATLDTLALYLACGIDPEKSTIFVQSHVPEHAQLGWALNCYTYFGELSRMTQFKDKSARYAENINAGLFDYPVLMAADILLYQTNLVPVGEDQKQHLELSRDIAQRFNGLYGDIFKVPEPFIPKSGARVMSLLEPTKKMSKSDDNRNNVIGLLEDPKSVVKKIKRAVTDSDEPPVVRYDVKEKAGVSNLLDILSAVTGQSIPELEKQFEGKMYGHLKGEVAEAVSGMLSELQERYHRFRNDEAFLQKVMKDGAEKASARAAETLKAVYEAIGFVAKP</sequence>
<evidence type="ECO:0000255" key="1">
    <source>
        <dbReference type="HAMAP-Rule" id="MF_00140"/>
    </source>
</evidence>
<comment type="function">
    <text evidence="1">Catalyzes the attachment of tryptophan to tRNA(Trp).</text>
</comment>
<comment type="catalytic activity">
    <reaction evidence="1">
        <text>tRNA(Trp) + L-tryptophan + ATP = L-tryptophyl-tRNA(Trp) + AMP + diphosphate + H(+)</text>
        <dbReference type="Rhea" id="RHEA:24080"/>
        <dbReference type="Rhea" id="RHEA-COMP:9671"/>
        <dbReference type="Rhea" id="RHEA-COMP:9705"/>
        <dbReference type="ChEBI" id="CHEBI:15378"/>
        <dbReference type="ChEBI" id="CHEBI:30616"/>
        <dbReference type="ChEBI" id="CHEBI:33019"/>
        <dbReference type="ChEBI" id="CHEBI:57912"/>
        <dbReference type="ChEBI" id="CHEBI:78442"/>
        <dbReference type="ChEBI" id="CHEBI:78535"/>
        <dbReference type="ChEBI" id="CHEBI:456215"/>
        <dbReference type="EC" id="6.1.1.2"/>
    </reaction>
</comment>
<comment type="subunit">
    <text evidence="1">Homodimer.</text>
</comment>
<comment type="subcellular location">
    <subcellularLocation>
        <location evidence="1">Cytoplasm</location>
    </subcellularLocation>
</comment>
<comment type="similarity">
    <text evidence="1">Belongs to the class-I aminoacyl-tRNA synthetase family.</text>
</comment>
<accession>P0A2P3</accession>
<accession>Q8XGS1</accession>